<proteinExistence type="inferred from homology"/>
<feature type="chain" id="PRO_0000062133" description="Large ribosomal subunit protein uL16">
    <location>
        <begin position="1"/>
        <end position="137"/>
    </location>
</feature>
<comment type="function">
    <text evidence="1">Binds 23S rRNA and is also seen to make contacts with the A and possibly P site tRNAs.</text>
</comment>
<comment type="subunit">
    <text evidence="1">Part of the 50S ribosomal subunit.</text>
</comment>
<comment type="similarity">
    <text evidence="1">Belongs to the universal ribosomal protein uL16 family.</text>
</comment>
<dbReference type="EMBL" id="AE017263">
    <property type="protein sequence ID" value="AAT75486.1"/>
    <property type="molecule type" value="Genomic_DNA"/>
</dbReference>
<dbReference type="RefSeq" id="WP_011183027.1">
    <property type="nucleotide sequence ID" value="NC_006055.1"/>
</dbReference>
<dbReference type="RefSeq" id="YP_053370.1">
    <property type="nucleotide sequence ID" value="NC_006055.1"/>
</dbReference>
<dbReference type="SMR" id="Q6F1Y7"/>
<dbReference type="STRING" id="265311.Mfl130"/>
<dbReference type="PaxDb" id="265311-Mfl130"/>
<dbReference type="EnsemblBacteria" id="AAT75486">
    <property type="protein sequence ID" value="AAT75486"/>
    <property type="gene ID" value="Mfl130"/>
</dbReference>
<dbReference type="GeneID" id="2898284"/>
<dbReference type="KEGG" id="mfl:Mfl130"/>
<dbReference type="PATRIC" id="fig|265311.5.peg.131"/>
<dbReference type="eggNOG" id="COG0197">
    <property type="taxonomic scope" value="Bacteria"/>
</dbReference>
<dbReference type="HOGENOM" id="CLU_078858_2_1_14"/>
<dbReference type="OrthoDB" id="9802589at2"/>
<dbReference type="Proteomes" id="UP000006647">
    <property type="component" value="Chromosome"/>
</dbReference>
<dbReference type="GO" id="GO:0022625">
    <property type="term" value="C:cytosolic large ribosomal subunit"/>
    <property type="evidence" value="ECO:0007669"/>
    <property type="project" value="TreeGrafter"/>
</dbReference>
<dbReference type="GO" id="GO:0019843">
    <property type="term" value="F:rRNA binding"/>
    <property type="evidence" value="ECO:0007669"/>
    <property type="project" value="UniProtKB-UniRule"/>
</dbReference>
<dbReference type="GO" id="GO:0003735">
    <property type="term" value="F:structural constituent of ribosome"/>
    <property type="evidence" value="ECO:0007669"/>
    <property type="project" value="InterPro"/>
</dbReference>
<dbReference type="GO" id="GO:0000049">
    <property type="term" value="F:tRNA binding"/>
    <property type="evidence" value="ECO:0007669"/>
    <property type="project" value="UniProtKB-KW"/>
</dbReference>
<dbReference type="GO" id="GO:0006412">
    <property type="term" value="P:translation"/>
    <property type="evidence" value="ECO:0007669"/>
    <property type="project" value="UniProtKB-UniRule"/>
</dbReference>
<dbReference type="CDD" id="cd01433">
    <property type="entry name" value="Ribosomal_L16_L10e"/>
    <property type="match status" value="1"/>
</dbReference>
<dbReference type="FunFam" id="3.90.1170.10:FF:000001">
    <property type="entry name" value="50S ribosomal protein L16"/>
    <property type="match status" value="1"/>
</dbReference>
<dbReference type="Gene3D" id="3.90.1170.10">
    <property type="entry name" value="Ribosomal protein L10e/L16"/>
    <property type="match status" value="1"/>
</dbReference>
<dbReference type="HAMAP" id="MF_01342">
    <property type="entry name" value="Ribosomal_uL16"/>
    <property type="match status" value="1"/>
</dbReference>
<dbReference type="InterPro" id="IPR047873">
    <property type="entry name" value="Ribosomal_uL16"/>
</dbReference>
<dbReference type="InterPro" id="IPR000114">
    <property type="entry name" value="Ribosomal_uL16_bact-type"/>
</dbReference>
<dbReference type="InterPro" id="IPR020798">
    <property type="entry name" value="Ribosomal_uL16_CS"/>
</dbReference>
<dbReference type="InterPro" id="IPR016180">
    <property type="entry name" value="Ribosomal_uL16_dom"/>
</dbReference>
<dbReference type="InterPro" id="IPR036920">
    <property type="entry name" value="Ribosomal_uL16_sf"/>
</dbReference>
<dbReference type="NCBIfam" id="TIGR01164">
    <property type="entry name" value="rplP_bact"/>
    <property type="match status" value="1"/>
</dbReference>
<dbReference type="PANTHER" id="PTHR12220">
    <property type="entry name" value="50S/60S RIBOSOMAL PROTEIN L16"/>
    <property type="match status" value="1"/>
</dbReference>
<dbReference type="PANTHER" id="PTHR12220:SF13">
    <property type="entry name" value="LARGE RIBOSOMAL SUBUNIT PROTEIN UL16M"/>
    <property type="match status" value="1"/>
</dbReference>
<dbReference type="Pfam" id="PF00252">
    <property type="entry name" value="Ribosomal_L16"/>
    <property type="match status" value="1"/>
</dbReference>
<dbReference type="PRINTS" id="PR00060">
    <property type="entry name" value="RIBOSOMALL16"/>
</dbReference>
<dbReference type="SUPFAM" id="SSF54686">
    <property type="entry name" value="Ribosomal protein L16p/L10e"/>
    <property type="match status" value="1"/>
</dbReference>
<dbReference type="PROSITE" id="PS00586">
    <property type="entry name" value="RIBOSOMAL_L16_1"/>
    <property type="match status" value="1"/>
</dbReference>
<dbReference type="PROSITE" id="PS00701">
    <property type="entry name" value="RIBOSOMAL_L16_2"/>
    <property type="match status" value="1"/>
</dbReference>
<keyword id="KW-1185">Reference proteome</keyword>
<keyword id="KW-0687">Ribonucleoprotein</keyword>
<keyword id="KW-0689">Ribosomal protein</keyword>
<keyword id="KW-0694">RNA-binding</keyword>
<keyword id="KW-0699">rRNA-binding</keyword>
<keyword id="KW-0820">tRNA-binding</keyword>
<gene>
    <name evidence="1" type="primary">rplP</name>
    <name type="ordered locus">Mfl130</name>
</gene>
<organism>
    <name type="scientific">Mesoplasma florum (strain ATCC 33453 / NBRC 100688 / NCTC 11704 / L1)</name>
    <name type="common">Acholeplasma florum</name>
    <dbReference type="NCBI Taxonomy" id="265311"/>
    <lineage>
        <taxon>Bacteria</taxon>
        <taxon>Bacillati</taxon>
        <taxon>Mycoplasmatota</taxon>
        <taxon>Mollicutes</taxon>
        <taxon>Entomoplasmatales</taxon>
        <taxon>Entomoplasmataceae</taxon>
        <taxon>Mesoplasma</taxon>
    </lineage>
</organism>
<accession>Q6F1Y7</accession>
<sequence length="137" mass="15667">MLLPKRTKYRKPHKVSFKGKAKGAKTINFGEYGLMSLDGAWIDNRQIEAARIAMTRYMRRDGKVWMRIFPHISMSKKPAEVRMGSGKGNPEKWVAVVKEGTVMFEIAGVSEETAREALRLAMHKLPVRCKFVKRGEE</sequence>
<name>RL16_MESFL</name>
<evidence type="ECO:0000255" key="1">
    <source>
        <dbReference type="HAMAP-Rule" id="MF_01342"/>
    </source>
</evidence>
<evidence type="ECO:0000305" key="2"/>
<reference key="1">
    <citation type="submission" date="2004-06" db="EMBL/GenBank/DDBJ databases">
        <authorList>
            <person name="Birren B.W."/>
            <person name="Stange-Thomann N."/>
            <person name="Hafez N."/>
            <person name="DeCaprio D."/>
            <person name="Fisher S."/>
            <person name="Butler J."/>
            <person name="Elkins T."/>
            <person name="Kodira C.D."/>
            <person name="Major J."/>
            <person name="Wang S."/>
            <person name="Nicol R."/>
            <person name="Nusbaum C."/>
        </authorList>
    </citation>
    <scope>NUCLEOTIDE SEQUENCE [LARGE SCALE GENOMIC DNA]</scope>
    <source>
        <strain>ATCC 33453 / NBRC 100688 / NCTC 11704 / L1</strain>
    </source>
</reference>
<protein>
    <recommendedName>
        <fullName evidence="1">Large ribosomal subunit protein uL16</fullName>
    </recommendedName>
    <alternativeName>
        <fullName evidence="2">50S ribosomal protein L16</fullName>
    </alternativeName>
</protein>